<protein>
    <recommendedName>
        <fullName evidence="1">Polyamine export protein</fullName>
    </recommendedName>
</protein>
<comment type="function">
    <text evidence="1">Involved in cadaverine and putrescine tolerance in stationary phase. May facilitate the efflux of both cadaverine and putrescine from the cytoplasm, reducing potentially toxic levels under certain stress conditions.</text>
</comment>
<comment type="subcellular location">
    <subcellularLocation>
        <location evidence="2">Cell inner membrane</location>
        <topology evidence="3">Multi-pass membrane protein</topology>
    </subcellularLocation>
</comment>
<comment type="similarity">
    <text evidence="6">Belongs to the UPF0053 family. PaeA subfamily.</text>
</comment>
<keyword id="KW-0129">CBS domain</keyword>
<keyword id="KW-0997">Cell inner membrane</keyword>
<keyword id="KW-1003">Cell membrane</keyword>
<keyword id="KW-0472">Membrane</keyword>
<keyword id="KW-1185">Reference proteome</keyword>
<keyword id="KW-0677">Repeat</keyword>
<keyword id="KW-0812">Transmembrane</keyword>
<keyword id="KW-1133">Transmembrane helix</keyword>
<keyword id="KW-0813">Transport</keyword>
<evidence type="ECO:0000250" key="1">
    <source>
        <dbReference type="UniProtKB" id="A0A0F6BAS6"/>
    </source>
</evidence>
<evidence type="ECO:0000250" key="2">
    <source>
        <dbReference type="UniProtKB" id="P0AE45"/>
    </source>
</evidence>
<evidence type="ECO:0000255" key="3"/>
<evidence type="ECO:0000255" key="4">
    <source>
        <dbReference type="PROSITE-ProRule" id="PRU00703"/>
    </source>
</evidence>
<evidence type="ECO:0000255" key="5">
    <source>
        <dbReference type="PROSITE-ProRule" id="PRU01193"/>
    </source>
</evidence>
<evidence type="ECO:0000305" key="6"/>
<proteinExistence type="inferred from homology"/>
<reference key="1">
    <citation type="journal article" date="2001" name="Nature">
        <title>Genome sequence of enterohaemorrhagic Escherichia coli O157:H7.</title>
        <authorList>
            <person name="Perna N.T."/>
            <person name="Plunkett G. III"/>
            <person name="Burland V."/>
            <person name="Mau B."/>
            <person name="Glasner J.D."/>
            <person name="Rose D.J."/>
            <person name="Mayhew G.F."/>
            <person name="Evans P.S."/>
            <person name="Gregor J."/>
            <person name="Kirkpatrick H.A."/>
            <person name="Posfai G."/>
            <person name="Hackett J."/>
            <person name="Klink S."/>
            <person name="Boutin A."/>
            <person name="Shao Y."/>
            <person name="Miller L."/>
            <person name="Grotbeck E.J."/>
            <person name="Davis N.W."/>
            <person name="Lim A."/>
            <person name="Dimalanta E.T."/>
            <person name="Potamousis K."/>
            <person name="Apodaca J."/>
            <person name="Anantharaman T.S."/>
            <person name="Lin J."/>
            <person name="Yen G."/>
            <person name="Schwartz D.C."/>
            <person name="Welch R.A."/>
            <person name="Blattner F.R."/>
        </authorList>
    </citation>
    <scope>NUCLEOTIDE SEQUENCE [LARGE SCALE GENOMIC DNA]</scope>
    <source>
        <strain>O157:H7 / EDL933 / ATCC 700927 / EHEC</strain>
    </source>
</reference>
<reference key="2">
    <citation type="journal article" date="2001" name="DNA Res.">
        <title>Complete genome sequence of enterohemorrhagic Escherichia coli O157:H7 and genomic comparison with a laboratory strain K-12.</title>
        <authorList>
            <person name="Hayashi T."/>
            <person name="Makino K."/>
            <person name="Ohnishi M."/>
            <person name="Kurokawa K."/>
            <person name="Ishii K."/>
            <person name="Yokoyama K."/>
            <person name="Han C.-G."/>
            <person name="Ohtsubo E."/>
            <person name="Nakayama K."/>
            <person name="Murata T."/>
            <person name="Tanaka M."/>
            <person name="Tobe T."/>
            <person name="Iida T."/>
            <person name="Takami H."/>
            <person name="Honda T."/>
            <person name="Sasakawa C."/>
            <person name="Ogasawara N."/>
            <person name="Yasunaga T."/>
            <person name="Kuhara S."/>
            <person name="Shiba T."/>
            <person name="Hattori M."/>
            <person name="Shinagawa H."/>
        </authorList>
    </citation>
    <scope>NUCLEOTIDE SEQUENCE [LARGE SCALE GENOMIC DNA]</scope>
    <source>
        <strain>O157:H7 / Sakai / RIMD 0509952 / EHEC</strain>
    </source>
</reference>
<feature type="chain" id="PRO_0000088363" description="Polyamine export protein">
    <location>
        <begin position="1"/>
        <end position="447"/>
    </location>
</feature>
<feature type="topological domain" description="Cytoplasmic" evidence="6">
    <location>
        <begin position="1"/>
        <end position="4"/>
    </location>
</feature>
<feature type="transmembrane region" description="Helical" evidence="3">
    <location>
        <begin position="5"/>
        <end position="25"/>
    </location>
</feature>
<feature type="topological domain" description="Periplasmic" evidence="6">
    <location>
        <begin position="26"/>
        <end position="54"/>
    </location>
</feature>
<feature type="transmembrane region" description="Helical" evidence="3">
    <location>
        <begin position="55"/>
        <end position="75"/>
    </location>
</feature>
<feature type="topological domain" description="Cytoplasmic" evidence="6">
    <location>
        <begin position="76"/>
        <end position="99"/>
    </location>
</feature>
<feature type="transmembrane region" description="Helical" evidence="3">
    <location>
        <begin position="100"/>
        <end position="120"/>
    </location>
</feature>
<feature type="topological domain" description="Periplasmic" evidence="6">
    <location>
        <begin position="121"/>
        <end position="141"/>
    </location>
</feature>
<feature type="transmembrane region" description="Helical" evidence="3">
    <location>
        <begin position="142"/>
        <end position="162"/>
    </location>
</feature>
<feature type="topological domain" description="Cytoplasmic" evidence="2">
    <location>
        <begin position="163"/>
        <end position="447"/>
    </location>
</feature>
<feature type="domain" description="CNNM transmembrane" evidence="5">
    <location>
        <begin position="1"/>
        <end position="197"/>
    </location>
</feature>
<feature type="domain" description="CBS 1" evidence="4">
    <location>
        <begin position="216"/>
        <end position="275"/>
    </location>
</feature>
<feature type="domain" description="CBS 2" evidence="4">
    <location>
        <begin position="282"/>
        <end position="343"/>
    </location>
</feature>
<organism>
    <name type="scientific">Escherichia coli O157:H7</name>
    <dbReference type="NCBI Taxonomy" id="83334"/>
    <lineage>
        <taxon>Bacteria</taxon>
        <taxon>Pseudomonadati</taxon>
        <taxon>Pseudomonadota</taxon>
        <taxon>Gammaproteobacteria</taxon>
        <taxon>Enterobacterales</taxon>
        <taxon>Enterobacteriaceae</taxon>
        <taxon>Escherichia</taxon>
    </lineage>
</organism>
<sequence>MLNSILVILCLIAVSAFFSMSEISLAASRKIKLKLLADEGNINAQRVLNMQENPGMFFTVVQIGLNAVAILGGIVGDAAFSPAFHSLFSRYMSAELSEQLSFILSFSLVTGMFILFADLTPKRIGMIAPEAVALRIINPMRFCLYVCTPLVWFFNGLANIIFRIFKLPMVRKDDITSDDIYAVVEAGALAGVLRKQEHELIENVFELESRTVPSSMTPRENVIWFDLHEDEQSLKNKVAEHPHSKFLVCNEDIDHIIGYVDSKDLLNRVLANQSLALNSGVQIRNTLIVPDTLTLSEALESFKTAGEDFAVIMNEYALVVGIITLNDVMTTLMGDLVGQGLEEQIVARDENSWLIDGGTPIDDVMRVLDIDEFPQSGNYETIGGFMMFMLRKIPKRTDSVKFAGYKFEVVDIDNYRIDQLLVTRIDSKATALSPKLPDAKDKEESVA</sequence>
<accession>P0AE47</accession>
<accession>P39319</accession>
<dbReference type="EMBL" id="AE005174">
    <property type="protein sequence ID" value="AAG59416.1"/>
    <property type="molecule type" value="Genomic_DNA"/>
</dbReference>
<dbReference type="EMBL" id="BA000007">
    <property type="protein sequence ID" value="BAB38619.1"/>
    <property type="molecule type" value="Genomic_DNA"/>
</dbReference>
<dbReference type="PIR" id="D86119">
    <property type="entry name" value="D86119"/>
</dbReference>
<dbReference type="PIR" id="D91278">
    <property type="entry name" value="D91278"/>
</dbReference>
<dbReference type="RefSeq" id="NP_313223.1">
    <property type="nucleotide sequence ID" value="NC_002695.1"/>
</dbReference>
<dbReference type="RefSeq" id="WP_000935036.1">
    <property type="nucleotide sequence ID" value="NZ_VOAI01000023.1"/>
</dbReference>
<dbReference type="SMR" id="P0AE47"/>
<dbReference type="STRING" id="155864.Z5829"/>
<dbReference type="GeneID" id="913900"/>
<dbReference type="KEGG" id="ece:Z5829"/>
<dbReference type="KEGG" id="ecs:ECs_5196"/>
<dbReference type="PATRIC" id="fig|386585.9.peg.5431"/>
<dbReference type="eggNOG" id="COG1253">
    <property type="taxonomic scope" value="Bacteria"/>
</dbReference>
<dbReference type="HOGENOM" id="CLU_015237_4_0_6"/>
<dbReference type="OMA" id="TIGGYMM"/>
<dbReference type="Proteomes" id="UP000000558">
    <property type="component" value="Chromosome"/>
</dbReference>
<dbReference type="Proteomes" id="UP000002519">
    <property type="component" value="Chromosome"/>
</dbReference>
<dbReference type="GO" id="GO:0005886">
    <property type="term" value="C:plasma membrane"/>
    <property type="evidence" value="ECO:0007669"/>
    <property type="project" value="UniProtKB-SubCell"/>
</dbReference>
<dbReference type="GO" id="GO:0050660">
    <property type="term" value="F:flavin adenine dinucleotide binding"/>
    <property type="evidence" value="ECO:0007669"/>
    <property type="project" value="InterPro"/>
</dbReference>
<dbReference type="CDD" id="cd04590">
    <property type="entry name" value="CBS_pair_CorC_HlyC_assoc"/>
    <property type="match status" value="1"/>
</dbReference>
<dbReference type="FunFam" id="3.10.580.10:FF:000005">
    <property type="entry name" value="HlyC/CorC family transporter"/>
    <property type="match status" value="1"/>
</dbReference>
<dbReference type="FunFam" id="3.30.465.10:FF:000002">
    <property type="entry name" value="HlyC/CorC family transporter"/>
    <property type="match status" value="1"/>
</dbReference>
<dbReference type="Gene3D" id="3.30.465.10">
    <property type="match status" value="1"/>
</dbReference>
<dbReference type="Gene3D" id="3.10.580.10">
    <property type="entry name" value="CBS-domain"/>
    <property type="match status" value="1"/>
</dbReference>
<dbReference type="InterPro" id="IPR000644">
    <property type="entry name" value="CBS_dom"/>
</dbReference>
<dbReference type="InterPro" id="IPR046342">
    <property type="entry name" value="CBS_dom_sf"/>
</dbReference>
<dbReference type="InterPro" id="IPR002550">
    <property type="entry name" value="CNNM"/>
</dbReference>
<dbReference type="InterPro" id="IPR036318">
    <property type="entry name" value="FAD-bd_PCMH-like_sf"/>
</dbReference>
<dbReference type="InterPro" id="IPR016169">
    <property type="entry name" value="FAD-bd_PCMH_sub2"/>
</dbReference>
<dbReference type="InterPro" id="IPR044751">
    <property type="entry name" value="Ion_transp-like_CBS"/>
</dbReference>
<dbReference type="InterPro" id="IPR005170">
    <property type="entry name" value="Transptr-assoc_dom"/>
</dbReference>
<dbReference type="PANTHER" id="PTHR22777">
    <property type="entry name" value="HEMOLYSIN-RELATED"/>
    <property type="match status" value="1"/>
</dbReference>
<dbReference type="PANTHER" id="PTHR22777:SF16">
    <property type="entry name" value="POLYAMINE EXPORT PROTEIN"/>
    <property type="match status" value="1"/>
</dbReference>
<dbReference type="Pfam" id="PF00571">
    <property type="entry name" value="CBS"/>
    <property type="match status" value="1"/>
</dbReference>
<dbReference type="Pfam" id="PF01595">
    <property type="entry name" value="CNNM"/>
    <property type="match status" value="1"/>
</dbReference>
<dbReference type="Pfam" id="PF03471">
    <property type="entry name" value="CorC_HlyC"/>
    <property type="match status" value="1"/>
</dbReference>
<dbReference type="SMART" id="SM01091">
    <property type="entry name" value="CorC_HlyC"/>
    <property type="match status" value="1"/>
</dbReference>
<dbReference type="SUPFAM" id="SSF54631">
    <property type="entry name" value="CBS-domain pair"/>
    <property type="match status" value="1"/>
</dbReference>
<dbReference type="SUPFAM" id="SSF56176">
    <property type="entry name" value="FAD-binding/transporter-associated domain-like"/>
    <property type="match status" value="1"/>
</dbReference>
<dbReference type="PROSITE" id="PS51371">
    <property type="entry name" value="CBS"/>
    <property type="match status" value="2"/>
</dbReference>
<dbReference type="PROSITE" id="PS51846">
    <property type="entry name" value="CNNM"/>
    <property type="match status" value="1"/>
</dbReference>
<name>PAEA_ECO57</name>
<gene>
    <name evidence="1" type="primary">paeA</name>
    <name type="synonym">ytfL</name>
    <name type="ordered locus">Z5829</name>
    <name type="ordered locus">ECs5196</name>
</gene>